<comment type="function">
    <text evidence="1">Key enzyme in the regulation of glycerol uptake and metabolism. Catalyzes the phosphorylation of glycerol to yield sn-glycerol 3-phosphate.</text>
</comment>
<comment type="catalytic activity">
    <reaction evidence="1">
        <text>glycerol + ATP = sn-glycerol 3-phosphate + ADP + H(+)</text>
        <dbReference type="Rhea" id="RHEA:21644"/>
        <dbReference type="ChEBI" id="CHEBI:15378"/>
        <dbReference type="ChEBI" id="CHEBI:17754"/>
        <dbReference type="ChEBI" id="CHEBI:30616"/>
        <dbReference type="ChEBI" id="CHEBI:57597"/>
        <dbReference type="ChEBI" id="CHEBI:456216"/>
        <dbReference type="EC" id="2.7.1.30"/>
    </reaction>
</comment>
<comment type="activity regulation">
    <text evidence="1">Activity of this regulatory enzyme is affected by several metabolites. Allosterically and non-competitively inhibited by fructose 1,6-bisphosphate (FBP) and unphosphorylated phosphocarrier protein EIIA-Glc (III-Glc), an integral component of the bacterial phosphotransferase (PTS) system.</text>
</comment>
<comment type="pathway">
    <text evidence="1">Polyol metabolism; glycerol degradation via glycerol kinase pathway; sn-glycerol 3-phosphate from glycerol: step 1/1.</text>
</comment>
<comment type="subunit">
    <text evidence="1">Homotetramer and homodimer (in equilibrium). Heterodimer with EIIA-Glc. Binds 1 zinc ion per glycerol kinase EIIA-Glc dimer. The zinc ion is important for dimerization.</text>
</comment>
<comment type="similarity">
    <text evidence="1">Belongs to the FGGY kinase family.</text>
</comment>
<comment type="sequence caution" evidence="2">
    <conflict type="erroneous initiation">
        <sequence resource="EMBL-CDS" id="CAE17140"/>
    </conflict>
    <text>Extended N-terminus.</text>
</comment>
<gene>
    <name evidence="1" type="primary">glpK</name>
    <name type="ordered locus">plu4768</name>
</gene>
<sequence length="502" mass="55454">MIEKKYIVALDQGTTSSRAIILDHDANIISISQREFTQIYPKPGWVEHDPMEIWATQSSTLVEVLAKADISSDQIAGIGITNQRETTIIWEKETGKPIYNAIVWQCRRTADACTKLKQKEGLEEYIRQNTGLVVDPYFSGTKVKWILDNVAGARERAEKGELLFGTVDTWLVWKMTQGRVHVTDFTNASRTMLFNIHNLEWDQHILDELQIPRSLLPSVHSSSEIYGQTNIGGKGGTRIPISGIAGDQQAALYGQLCVQPGMAKNTYGTGCFLLMNTGTDAVRSNHGLLTTIACGPRGEVNYALEGAVFVGGASIQWLRDELKLIADAADSEYFATKVKNSNGVYVVPAFTGLGAPYWDPYARGSIFGLTRGTNSNHIIRATLESIAYQTRDVLDAMQADAGTRLQALRVDGGAVANNFLMQFQSDILGTRVERPVVRESTALGAAFLAGLAVGYWKDLDEVKSKATIEKEFRPGIETTERNYKYNGWKKAVARAQDWEDKG</sequence>
<protein>
    <recommendedName>
        <fullName evidence="1">Glycerol kinase</fullName>
        <ecNumber evidence="1">2.7.1.30</ecNumber>
    </recommendedName>
    <alternativeName>
        <fullName evidence="1">ATP:glycerol 3-phosphotransferase</fullName>
    </alternativeName>
    <alternativeName>
        <fullName evidence="1">Glycerokinase</fullName>
        <shortName evidence="1">GK</shortName>
    </alternativeName>
</protein>
<feature type="chain" id="PRO_0000059475" description="Glycerol kinase">
    <location>
        <begin position="1"/>
        <end position="502"/>
    </location>
</feature>
<feature type="binding site" evidence="1">
    <location>
        <position position="14"/>
    </location>
    <ligand>
        <name>ADP</name>
        <dbReference type="ChEBI" id="CHEBI:456216"/>
    </ligand>
</feature>
<feature type="binding site" evidence="1">
    <location>
        <position position="14"/>
    </location>
    <ligand>
        <name>ATP</name>
        <dbReference type="ChEBI" id="CHEBI:30616"/>
    </ligand>
</feature>
<feature type="binding site" evidence="1">
    <location>
        <position position="14"/>
    </location>
    <ligand>
        <name>sn-glycerol 3-phosphate</name>
        <dbReference type="ChEBI" id="CHEBI:57597"/>
    </ligand>
</feature>
<feature type="binding site" evidence="1">
    <location>
        <position position="15"/>
    </location>
    <ligand>
        <name>ATP</name>
        <dbReference type="ChEBI" id="CHEBI:30616"/>
    </ligand>
</feature>
<feature type="binding site" evidence="1">
    <location>
        <position position="16"/>
    </location>
    <ligand>
        <name>ATP</name>
        <dbReference type="ChEBI" id="CHEBI:30616"/>
    </ligand>
</feature>
<feature type="binding site" evidence="1">
    <location>
        <position position="18"/>
    </location>
    <ligand>
        <name>ADP</name>
        <dbReference type="ChEBI" id="CHEBI:456216"/>
    </ligand>
</feature>
<feature type="binding site" evidence="1">
    <location>
        <position position="84"/>
    </location>
    <ligand>
        <name>glycerol</name>
        <dbReference type="ChEBI" id="CHEBI:17754"/>
    </ligand>
</feature>
<feature type="binding site" evidence="1">
    <location>
        <position position="84"/>
    </location>
    <ligand>
        <name>sn-glycerol 3-phosphate</name>
        <dbReference type="ChEBI" id="CHEBI:57597"/>
    </ligand>
</feature>
<feature type="binding site" evidence="1">
    <location>
        <position position="85"/>
    </location>
    <ligand>
        <name>glycerol</name>
        <dbReference type="ChEBI" id="CHEBI:17754"/>
    </ligand>
</feature>
<feature type="binding site" evidence="1">
    <location>
        <position position="85"/>
    </location>
    <ligand>
        <name>sn-glycerol 3-phosphate</name>
        <dbReference type="ChEBI" id="CHEBI:57597"/>
    </ligand>
</feature>
<feature type="binding site" evidence="1">
    <location>
        <position position="137"/>
    </location>
    <ligand>
        <name>glycerol</name>
        <dbReference type="ChEBI" id="CHEBI:17754"/>
    </ligand>
</feature>
<feature type="binding site" evidence="1">
    <location>
        <position position="137"/>
    </location>
    <ligand>
        <name>sn-glycerol 3-phosphate</name>
        <dbReference type="ChEBI" id="CHEBI:57597"/>
    </ligand>
</feature>
<feature type="binding site" evidence="1">
    <location>
        <position position="247"/>
    </location>
    <ligand>
        <name>glycerol</name>
        <dbReference type="ChEBI" id="CHEBI:17754"/>
    </ligand>
</feature>
<feature type="binding site" evidence="1">
    <location>
        <position position="247"/>
    </location>
    <ligand>
        <name>sn-glycerol 3-phosphate</name>
        <dbReference type="ChEBI" id="CHEBI:57597"/>
    </ligand>
</feature>
<feature type="binding site" evidence="1">
    <location>
        <position position="248"/>
    </location>
    <ligand>
        <name>glycerol</name>
        <dbReference type="ChEBI" id="CHEBI:17754"/>
    </ligand>
</feature>
<feature type="binding site" evidence="1">
    <location>
        <position position="269"/>
    </location>
    <ligand>
        <name>ADP</name>
        <dbReference type="ChEBI" id="CHEBI:456216"/>
    </ligand>
</feature>
<feature type="binding site" evidence="1">
    <location>
        <position position="269"/>
    </location>
    <ligand>
        <name>ATP</name>
        <dbReference type="ChEBI" id="CHEBI:30616"/>
    </ligand>
</feature>
<feature type="binding site" evidence="1">
    <location>
        <position position="312"/>
    </location>
    <ligand>
        <name>ADP</name>
        <dbReference type="ChEBI" id="CHEBI:456216"/>
    </ligand>
</feature>
<feature type="binding site" evidence="1">
    <location>
        <position position="312"/>
    </location>
    <ligand>
        <name>ATP</name>
        <dbReference type="ChEBI" id="CHEBI:30616"/>
    </ligand>
</feature>
<feature type="binding site" evidence="1">
    <location>
        <position position="316"/>
    </location>
    <ligand>
        <name>ATP</name>
        <dbReference type="ChEBI" id="CHEBI:30616"/>
    </ligand>
</feature>
<feature type="binding site" evidence="1">
    <location>
        <position position="413"/>
    </location>
    <ligand>
        <name>ADP</name>
        <dbReference type="ChEBI" id="CHEBI:456216"/>
    </ligand>
</feature>
<feature type="binding site" evidence="1">
    <location>
        <position position="413"/>
    </location>
    <ligand>
        <name>ATP</name>
        <dbReference type="ChEBI" id="CHEBI:30616"/>
    </ligand>
</feature>
<feature type="binding site" evidence="1">
    <location>
        <position position="417"/>
    </location>
    <ligand>
        <name>ADP</name>
        <dbReference type="ChEBI" id="CHEBI:456216"/>
    </ligand>
</feature>
<keyword id="KW-0021">Allosteric enzyme</keyword>
<keyword id="KW-0067">ATP-binding</keyword>
<keyword id="KW-0319">Glycerol metabolism</keyword>
<keyword id="KW-0418">Kinase</keyword>
<keyword id="KW-0479">Metal-binding</keyword>
<keyword id="KW-0547">Nucleotide-binding</keyword>
<keyword id="KW-1185">Reference proteome</keyword>
<keyword id="KW-0808">Transferase</keyword>
<keyword id="KW-0862">Zinc</keyword>
<evidence type="ECO:0000255" key="1">
    <source>
        <dbReference type="HAMAP-Rule" id="MF_00186"/>
    </source>
</evidence>
<evidence type="ECO:0000305" key="2"/>
<name>GLPK_PHOLL</name>
<dbReference type="EC" id="2.7.1.30" evidence="1"/>
<dbReference type="EMBL" id="BX571874">
    <property type="protein sequence ID" value="CAE17140.1"/>
    <property type="status" value="ALT_INIT"/>
    <property type="molecule type" value="Genomic_DNA"/>
</dbReference>
<dbReference type="RefSeq" id="WP_011148833.1">
    <property type="nucleotide sequence ID" value="NC_005126.1"/>
</dbReference>
<dbReference type="SMR" id="Q7MYB6"/>
<dbReference type="STRING" id="243265.plu4768"/>
<dbReference type="GeneID" id="48851001"/>
<dbReference type="KEGG" id="plu:plu4768"/>
<dbReference type="eggNOG" id="COG0554">
    <property type="taxonomic scope" value="Bacteria"/>
</dbReference>
<dbReference type="HOGENOM" id="CLU_009281_2_3_6"/>
<dbReference type="OrthoDB" id="9805576at2"/>
<dbReference type="UniPathway" id="UPA00618">
    <property type="reaction ID" value="UER00672"/>
</dbReference>
<dbReference type="Proteomes" id="UP000002514">
    <property type="component" value="Chromosome"/>
</dbReference>
<dbReference type="GO" id="GO:0005829">
    <property type="term" value="C:cytosol"/>
    <property type="evidence" value="ECO:0007669"/>
    <property type="project" value="TreeGrafter"/>
</dbReference>
<dbReference type="GO" id="GO:0005524">
    <property type="term" value="F:ATP binding"/>
    <property type="evidence" value="ECO:0007669"/>
    <property type="project" value="UniProtKB-UniRule"/>
</dbReference>
<dbReference type="GO" id="GO:0004370">
    <property type="term" value="F:glycerol kinase activity"/>
    <property type="evidence" value="ECO:0000250"/>
    <property type="project" value="UniProtKB"/>
</dbReference>
<dbReference type="GO" id="GO:0046872">
    <property type="term" value="F:metal ion binding"/>
    <property type="evidence" value="ECO:0007669"/>
    <property type="project" value="UniProtKB-KW"/>
</dbReference>
<dbReference type="GO" id="GO:0019563">
    <property type="term" value="P:glycerol catabolic process"/>
    <property type="evidence" value="ECO:0007669"/>
    <property type="project" value="UniProtKB-UniRule"/>
</dbReference>
<dbReference type="GO" id="GO:0006071">
    <property type="term" value="P:glycerol metabolic process"/>
    <property type="evidence" value="ECO:0000250"/>
    <property type="project" value="UniProtKB"/>
</dbReference>
<dbReference type="GO" id="GO:0006072">
    <property type="term" value="P:glycerol-3-phosphate metabolic process"/>
    <property type="evidence" value="ECO:0007669"/>
    <property type="project" value="InterPro"/>
</dbReference>
<dbReference type="CDD" id="cd07786">
    <property type="entry name" value="FGGY_EcGK_like"/>
    <property type="match status" value="1"/>
</dbReference>
<dbReference type="FunFam" id="3.30.420.40:FF:000007">
    <property type="entry name" value="Glycerol kinase"/>
    <property type="match status" value="1"/>
</dbReference>
<dbReference type="FunFam" id="3.30.420.40:FF:000008">
    <property type="entry name" value="Glycerol kinase"/>
    <property type="match status" value="1"/>
</dbReference>
<dbReference type="Gene3D" id="3.30.420.40">
    <property type="match status" value="2"/>
</dbReference>
<dbReference type="HAMAP" id="MF_00186">
    <property type="entry name" value="Glycerol_kin"/>
    <property type="match status" value="1"/>
</dbReference>
<dbReference type="InterPro" id="IPR043129">
    <property type="entry name" value="ATPase_NBD"/>
</dbReference>
<dbReference type="InterPro" id="IPR000577">
    <property type="entry name" value="Carb_kinase_FGGY"/>
</dbReference>
<dbReference type="InterPro" id="IPR018483">
    <property type="entry name" value="Carb_kinase_FGGY_CS"/>
</dbReference>
<dbReference type="InterPro" id="IPR018485">
    <property type="entry name" value="FGGY_C"/>
</dbReference>
<dbReference type="InterPro" id="IPR018484">
    <property type="entry name" value="FGGY_N"/>
</dbReference>
<dbReference type="InterPro" id="IPR005999">
    <property type="entry name" value="Glycerol_kin"/>
</dbReference>
<dbReference type="NCBIfam" id="TIGR01311">
    <property type="entry name" value="glycerol_kin"/>
    <property type="match status" value="1"/>
</dbReference>
<dbReference type="NCBIfam" id="NF000756">
    <property type="entry name" value="PRK00047.1"/>
    <property type="match status" value="1"/>
</dbReference>
<dbReference type="PANTHER" id="PTHR10196:SF69">
    <property type="entry name" value="GLYCEROL KINASE"/>
    <property type="match status" value="1"/>
</dbReference>
<dbReference type="PANTHER" id="PTHR10196">
    <property type="entry name" value="SUGAR KINASE"/>
    <property type="match status" value="1"/>
</dbReference>
<dbReference type="Pfam" id="PF02782">
    <property type="entry name" value="FGGY_C"/>
    <property type="match status" value="1"/>
</dbReference>
<dbReference type="Pfam" id="PF00370">
    <property type="entry name" value="FGGY_N"/>
    <property type="match status" value="1"/>
</dbReference>
<dbReference type="PIRSF" id="PIRSF000538">
    <property type="entry name" value="GlpK"/>
    <property type="match status" value="1"/>
</dbReference>
<dbReference type="SUPFAM" id="SSF53067">
    <property type="entry name" value="Actin-like ATPase domain"/>
    <property type="match status" value="2"/>
</dbReference>
<dbReference type="PROSITE" id="PS00933">
    <property type="entry name" value="FGGY_KINASES_1"/>
    <property type="match status" value="1"/>
</dbReference>
<dbReference type="PROSITE" id="PS00445">
    <property type="entry name" value="FGGY_KINASES_2"/>
    <property type="match status" value="1"/>
</dbReference>
<reference key="1">
    <citation type="journal article" date="2003" name="Nat. Biotechnol.">
        <title>The genome sequence of the entomopathogenic bacterium Photorhabdus luminescens.</title>
        <authorList>
            <person name="Duchaud E."/>
            <person name="Rusniok C."/>
            <person name="Frangeul L."/>
            <person name="Buchrieser C."/>
            <person name="Givaudan A."/>
            <person name="Taourit S."/>
            <person name="Bocs S."/>
            <person name="Boursaux-Eude C."/>
            <person name="Chandler M."/>
            <person name="Charles J.-F."/>
            <person name="Dassa E."/>
            <person name="Derose R."/>
            <person name="Derzelle S."/>
            <person name="Freyssinet G."/>
            <person name="Gaudriault S."/>
            <person name="Medigue C."/>
            <person name="Lanois A."/>
            <person name="Powell K."/>
            <person name="Siguier P."/>
            <person name="Vincent R."/>
            <person name="Wingate V."/>
            <person name="Zouine M."/>
            <person name="Glaser P."/>
            <person name="Boemare N."/>
            <person name="Danchin A."/>
            <person name="Kunst F."/>
        </authorList>
    </citation>
    <scope>NUCLEOTIDE SEQUENCE [LARGE SCALE GENOMIC DNA]</scope>
    <source>
        <strain>DSM 15139 / CIP 105565 / TT01</strain>
    </source>
</reference>
<organism>
    <name type="scientific">Photorhabdus laumondii subsp. laumondii (strain DSM 15139 / CIP 105565 / TT01)</name>
    <name type="common">Photorhabdus luminescens subsp. laumondii</name>
    <dbReference type="NCBI Taxonomy" id="243265"/>
    <lineage>
        <taxon>Bacteria</taxon>
        <taxon>Pseudomonadati</taxon>
        <taxon>Pseudomonadota</taxon>
        <taxon>Gammaproteobacteria</taxon>
        <taxon>Enterobacterales</taxon>
        <taxon>Morganellaceae</taxon>
        <taxon>Photorhabdus</taxon>
    </lineage>
</organism>
<accession>Q7MYB6</accession>
<proteinExistence type="inferred from homology"/>